<reference key="1">
    <citation type="journal article" date="2005" name="Nucleic Acids Res.">
        <title>Genome dynamics and diversity of Shigella species, the etiologic agents of bacillary dysentery.</title>
        <authorList>
            <person name="Yang F."/>
            <person name="Yang J."/>
            <person name="Zhang X."/>
            <person name="Chen L."/>
            <person name="Jiang Y."/>
            <person name="Yan Y."/>
            <person name="Tang X."/>
            <person name="Wang J."/>
            <person name="Xiong Z."/>
            <person name="Dong J."/>
            <person name="Xue Y."/>
            <person name="Zhu Y."/>
            <person name="Xu X."/>
            <person name="Sun L."/>
            <person name="Chen S."/>
            <person name="Nie H."/>
            <person name="Peng J."/>
            <person name="Xu J."/>
            <person name="Wang Y."/>
            <person name="Yuan Z."/>
            <person name="Wen Y."/>
            <person name="Yao Z."/>
            <person name="Shen Y."/>
            <person name="Qiang B."/>
            <person name="Hou Y."/>
            <person name="Yu J."/>
            <person name="Jin Q."/>
        </authorList>
    </citation>
    <scope>NUCLEOTIDE SEQUENCE [LARGE SCALE GENOMIC DNA]</scope>
    <source>
        <strain>Sb227</strain>
    </source>
</reference>
<feature type="chain" id="PRO_0000243734" description="Large ribosomal subunit protein bL20">
    <location>
        <begin position="1"/>
        <end position="110"/>
    </location>
</feature>
<protein>
    <recommendedName>
        <fullName evidence="1">Large ribosomal subunit protein bL20</fullName>
    </recommendedName>
    <alternativeName>
        <fullName evidence="2">50S ribosomal protein L20</fullName>
    </alternativeName>
</protein>
<dbReference type="EMBL" id="CP000036">
    <property type="protein sequence ID" value="ABB66001.1"/>
    <property type="molecule type" value="Genomic_DNA"/>
</dbReference>
<dbReference type="SMR" id="Q321K7"/>
<dbReference type="KEGG" id="sbo:SBO_1378"/>
<dbReference type="HOGENOM" id="CLU_123265_0_1_6"/>
<dbReference type="Proteomes" id="UP000007067">
    <property type="component" value="Chromosome"/>
</dbReference>
<dbReference type="GO" id="GO:1990904">
    <property type="term" value="C:ribonucleoprotein complex"/>
    <property type="evidence" value="ECO:0007669"/>
    <property type="project" value="UniProtKB-KW"/>
</dbReference>
<dbReference type="GO" id="GO:0005840">
    <property type="term" value="C:ribosome"/>
    <property type="evidence" value="ECO:0007669"/>
    <property type="project" value="UniProtKB-KW"/>
</dbReference>
<dbReference type="GO" id="GO:0019843">
    <property type="term" value="F:rRNA binding"/>
    <property type="evidence" value="ECO:0007669"/>
    <property type="project" value="UniProtKB-UniRule"/>
</dbReference>
<dbReference type="GO" id="GO:0003735">
    <property type="term" value="F:structural constituent of ribosome"/>
    <property type="evidence" value="ECO:0007669"/>
    <property type="project" value="InterPro"/>
</dbReference>
<dbReference type="GO" id="GO:0000027">
    <property type="term" value="P:ribosomal large subunit assembly"/>
    <property type="evidence" value="ECO:0007669"/>
    <property type="project" value="UniProtKB-UniRule"/>
</dbReference>
<dbReference type="GO" id="GO:0006412">
    <property type="term" value="P:translation"/>
    <property type="evidence" value="ECO:0007669"/>
    <property type="project" value="InterPro"/>
</dbReference>
<dbReference type="CDD" id="cd07026">
    <property type="entry name" value="Ribosomal_L20"/>
    <property type="match status" value="1"/>
</dbReference>
<dbReference type="FunFam" id="1.10.1900.20:FF:000001">
    <property type="entry name" value="50S ribosomal protein L20"/>
    <property type="match status" value="1"/>
</dbReference>
<dbReference type="Gene3D" id="6.10.160.10">
    <property type="match status" value="1"/>
</dbReference>
<dbReference type="Gene3D" id="1.10.1900.20">
    <property type="entry name" value="Ribosomal protein L20"/>
    <property type="match status" value="1"/>
</dbReference>
<dbReference type="HAMAP" id="MF_00382">
    <property type="entry name" value="Ribosomal_bL20"/>
    <property type="match status" value="1"/>
</dbReference>
<dbReference type="InterPro" id="IPR005813">
    <property type="entry name" value="Ribosomal_bL20"/>
</dbReference>
<dbReference type="InterPro" id="IPR049946">
    <property type="entry name" value="RIBOSOMAL_L20_CS"/>
</dbReference>
<dbReference type="InterPro" id="IPR035566">
    <property type="entry name" value="Ribosomal_protein_bL20_C"/>
</dbReference>
<dbReference type="NCBIfam" id="TIGR01032">
    <property type="entry name" value="rplT_bact"/>
    <property type="match status" value="1"/>
</dbReference>
<dbReference type="PANTHER" id="PTHR10986">
    <property type="entry name" value="39S RIBOSOMAL PROTEIN L20"/>
    <property type="match status" value="1"/>
</dbReference>
<dbReference type="Pfam" id="PF00453">
    <property type="entry name" value="Ribosomal_L20"/>
    <property type="match status" value="1"/>
</dbReference>
<dbReference type="PRINTS" id="PR00062">
    <property type="entry name" value="RIBOSOMALL20"/>
</dbReference>
<dbReference type="SUPFAM" id="SSF74731">
    <property type="entry name" value="Ribosomal protein L20"/>
    <property type="match status" value="1"/>
</dbReference>
<dbReference type="PROSITE" id="PS00937">
    <property type="entry name" value="RIBOSOMAL_L20"/>
    <property type="match status" value="1"/>
</dbReference>
<accession>Q321K7</accession>
<proteinExistence type="inferred from homology"/>
<comment type="function">
    <text evidence="1">Binds directly to 23S ribosomal RNA and is necessary for the in vitro assembly process of the 50S ribosomal subunit. It is not involved in the protein synthesizing functions of that subunit.</text>
</comment>
<comment type="similarity">
    <text evidence="1">Belongs to the bacterial ribosomal protein bL20 family.</text>
</comment>
<gene>
    <name evidence="1" type="primary">rplT</name>
    <name type="ordered locus">SBO_1378</name>
</gene>
<organism>
    <name type="scientific">Shigella boydii serotype 4 (strain Sb227)</name>
    <dbReference type="NCBI Taxonomy" id="300268"/>
    <lineage>
        <taxon>Bacteria</taxon>
        <taxon>Pseudomonadati</taxon>
        <taxon>Pseudomonadota</taxon>
        <taxon>Gammaproteobacteria</taxon>
        <taxon>Enterobacterales</taxon>
        <taxon>Enterobacteriaceae</taxon>
        <taxon>Shigella</taxon>
    </lineage>
</organism>
<keyword id="KW-0687">Ribonucleoprotein</keyword>
<keyword id="KW-0689">Ribosomal protein</keyword>
<keyword id="KW-0694">RNA-binding</keyword>
<keyword id="KW-0699">rRNA-binding</keyword>
<name>RL20_SHIBS</name>
<sequence>MARVKRGVIARARHKKILKQAKGYYGARSRVYRVAFQAVIKAGQYAYRDRRQRKRQFRQLWIARINAAARQNGISYSKFINGLKKASVEIDRKILADIAVFDKVAFHHSG</sequence>
<evidence type="ECO:0000255" key="1">
    <source>
        <dbReference type="HAMAP-Rule" id="MF_00382"/>
    </source>
</evidence>
<evidence type="ECO:0000305" key="2"/>